<feature type="chain" id="PRO_1000019892" description="Probable cytosol aminopeptidase">
    <location>
        <begin position="1"/>
        <end position="503"/>
    </location>
</feature>
<feature type="active site" evidence="1">
    <location>
        <position position="286"/>
    </location>
</feature>
<feature type="active site" evidence="1">
    <location>
        <position position="360"/>
    </location>
</feature>
<feature type="binding site" evidence="1">
    <location>
        <position position="274"/>
    </location>
    <ligand>
        <name>Mn(2+)</name>
        <dbReference type="ChEBI" id="CHEBI:29035"/>
        <label>2</label>
    </ligand>
</feature>
<feature type="binding site" evidence="1">
    <location>
        <position position="279"/>
    </location>
    <ligand>
        <name>Mn(2+)</name>
        <dbReference type="ChEBI" id="CHEBI:29035"/>
        <label>1</label>
    </ligand>
</feature>
<feature type="binding site" evidence="1">
    <location>
        <position position="279"/>
    </location>
    <ligand>
        <name>Mn(2+)</name>
        <dbReference type="ChEBI" id="CHEBI:29035"/>
        <label>2</label>
    </ligand>
</feature>
<feature type="binding site" evidence="1">
    <location>
        <position position="297"/>
    </location>
    <ligand>
        <name>Mn(2+)</name>
        <dbReference type="ChEBI" id="CHEBI:29035"/>
        <label>2</label>
    </ligand>
</feature>
<feature type="binding site" evidence="1">
    <location>
        <position position="356"/>
    </location>
    <ligand>
        <name>Mn(2+)</name>
        <dbReference type="ChEBI" id="CHEBI:29035"/>
        <label>1</label>
    </ligand>
</feature>
<feature type="binding site" evidence="1">
    <location>
        <position position="358"/>
    </location>
    <ligand>
        <name>Mn(2+)</name>
        <dbReference type="ChEBI" id="CHEBI:29035"/>
        <label>1</label>
    </ligand>
</feature>
<feature type="binding site" evidence="1">
    <location>
        <position position="358"/>
    </location>
    <ligand>
        <name>Mn(2+)</name>
        <dbReference type="ChEBI" id="CHEBI:29035"/>
        <label>2</label>
    </ligand>
</feature>
<sequence>MDFSIKGCDWSKGTANGFLTGKSDCIVLGVFEAQTLSGAALDIDEATKGLVSRVIKAGDIDGKLGKTLFLHEVSGIGASRVLLVGLGRQDAFSQKAYGDAAKVAWRALLGTKVVQVTFTLAQLPVPERASDWGVRAAILALRNETYKFTQMKSKPDAGAPALKRVVFSVDPADDKAAKVAAKQAVALANGMDLTRDLGNLPGNVCTPTYLANTAKKIAKDWGLKVDVLGLKQIQALKMGSFLSVAKGSVEPPQFIVLQYRGAAAKAAPVVLVGKGITFDSGGISLKPGEGMDEMKYDMCGAGSVLGTMRAVAEMGLKVNVVAIVPTCENMPAGNANKPGDIVTSMKGLTIEVLNTDAEGRLILCDALTYAERFKPAAVIDVATLTGACIIALGHHNTGLFSKDDALAGELLDASREAGDPAWRLPLDDEYQDQLKSNFADLANIGGRPAGSVTAACFLSRFAENYPWAHLDIAGTAWKSGAAKGATGRPVPLLAQFLIDRAGA</sequence>
<accession>A3MLR1</accession>
<dbReference type="EC" id="3.4.11.1" evidence="1"/>
<dbReference type="EC" id="3.4.11.10" evidence="1"/>
<dbReference type="EMBL" id="CP000548">
    <property type="protein sequence ID" value="ABO06760.1"/>
    <property type="molecule type" value="Genomic_DNA"/>
</dbReference>
<dbReference type="RefSeq" id="WP_004191270.1">
    <property type="nucleotide sequence ID" value="NZ_CP007802.1"/>
</dbReference>
<dbReference type="SMR" id="A3MLR1"/>
<dbReference type="MEROPS" id="M17.003"/>
<dbReference type="KEGG" id="bmaz:BM44_1523"/>
<dbReference type="KEGG" id="bmn:BMA10247_1653"/>
<dbReference type="PATRIC" id="fig|320389.8.peg.1702"/>
<dbReference type="GO" id="GO:0005737">
    <property type="term" value="C:cytoplasm"/>
    <property type="evidence" value="ECO:0007669"/>
    <property type="project" value="UniProtKB-SubCell"/>
</dbReference>
<dbReference type="GO" id="GO:0030145">
    <property type="term" value="F:manganese ion binding"/>
    <property type="evidence" value="ECO:0007669"/>
    <property type="project" value="UniProtKB-UniRule"/>
</dbReference>
<dbReference type="GO" id="GO:0070006">
    <property type="term" value="F:metalloaminopeptidase activity"/>
    <property type="evidence" value="ECO:0007669"/>
    <property type="project" value="InterPro"/>
</dbReference>
<dbReference type="GO" id="GO:0006508">
    <property type="term" value="P:proteolysis"/>
    <property type="evidence" value="ECO:0007669"/>
    <property type="project" value="UniProtKB-KW"/>
</dbReference>
<dbReference type="CDD" id="cd00433">
    <property type="entry name" value="Peptidase_M17"/>
    <property type="match status" value="1"/>
</dbReference>
<dbReference type="FunFam" id="3.40.630.10:FF:000004">
    <property type="entry name" value="Probable cytosol aminopeptidase"/>
    <property type="match status" value="1"/>
</dbReference>
<dbReference type="Gene3D" id="3.40.220.10">
    <property type="entry name" value="Leucine Aminopeptidase, subunit E, domain 1"/>
    <property type="match status" value="1"/>
</dbReference>
<dbReference type="Gene3D" id="3.40.630.10">
    <property type="entry name" value="Zn peptidases"/>
    <property type="match status" value="1"/>
</dbReference>
<dbReference type="HAMAP" id="MF_00181">
    <property type="entry name" value="Cytosol_peptidase_M17"/>
    <property type="match status" value="1"/>
</dbReference>
<dbReference type="InterPro" id="IPR011356">
    <property type="entry name" value="Leucine_aapep/pepB"/>
</dbReference>
<dbReference type="InterPro" id="IPR043472">
    <property type="entry name" value="Macro_dom-like"/>
</dbReference>
<dbReference type="InterPro" id="IPR000819">
    <property type="entry name" value="Peptidase_M17_C"/>
</dbReference>
<dbReference type="InterPro" id="IPR023042">
    <property type="entry name" value="Peptidase_M17_leu_NH2_pept"/>
</dbReference>
<dbReference type="InterPro" id="IPR008283">
    <property type="entry name" value="Peptidase_M17_N"/>
</dbReference>
<dbReference type="NCBIfam" id="NF002073">
    <property type="entry name" value="PRK00913.1-2"/>
    <property type="match status" value="1"/>
</dbReference>
<dbReference type="NCBIfam" id="NF002074">
    <property type="entry name" value="PRK00913.1-4"/>
    <property type="match status" value="1"/>
</dbReference>
<dbReference type="NCBIfam" id="NF002077">
    <property type="entry name" value="PRK00913.2-4"/>
    <property type="match status" value="1"/>
</dbReference>
<dbReference type="NCBIfam" id="NF002083">
    <property type="entry name" value="PRK00913.3-5"/>
    <property type="match status" value="1"/>
</dbReference>
<dbReference type="PANTHER" id="PTHR11963:SF23">
    <property type="entry name" value="CYTOSOL AMINOPEPTIDASE"/>
    <property type="match status" value="1"/>
</dbReference>
<dbReference type="PANTHER" id="PTHR11963">
    <property type="entry name" value="LEUCINE AMINOPEPTIDASE-RELATED"/>
    <property type="match status" value="1"/>
</dbReference>
<dbReference type="Pfam" id="PF00883">
    <property type="entry name" value="Peptidase_M17"/>
    <property type="match status" value="1"/>
</dbReference>
<dbReference type="Pfam" id="PF02789">
    <property type="entry name" value="Peptidase_M17_N"/>
    <property type="match status" value="1"/>
</dbReference>
<dbReference type="PRINTS" id="PR00481">
    <property type="entry name" value="LAMNOPPTDASE"/>
</dbReference>
<dbReference type="SUPFAM" id="SSF52949">
    <property type="entry name" value="Macro domain-like"/>
    <property type="match status" value="1"/>
</dbReference>
<dbReference type="SUPFAM" id="SSF53187">
    <property type="entry name" value="Zn-dependent exopeptidases"/>
    <property type="match status" value="1"/>
</dbReference>
<dbReference type="PROSITE" id="PS00631">
    <property type="entry name" value="CYTOSOL_AP"/>
    <property type="match status" value="1"/>
</dbReference>
<name>AMPA_BURM7</name>
<protein>
    <recommendedName>
        <fullName evidence="1">Probable cytosol aminopeptidase</fullName>
        <ecNumber evidence="1">3.4.11.1</ecNumber>
    </recommendedName>
    <alternativeName>
        <fullName evidence="1">Leucine aminopeptidase</fullName>
        <shortName evidence="1">LAP</shortName>
        <ecNumber evidence="1">3.4.11.10</ecNumber>
    </alternativeName>
    <alternativeName>
        <fullName evidence="1">Leucyl aminopeptidase</fullName>
    </alternativeName>
</protein>
<gene>
    <name evidence="1" type="primary">pepA</name>
    <name type="ordered locus">BMA10247_1653</name>
</gene>
<organism>
    <name type="scientific">Burkholderia mallei (strain NCTC 10247)</name>
    <dbReference type="NCBI Taxonomy" id="320389"/>
    <lineage>
        <taxon>Bacteria</taxon>
        <taxon>Pseudomonadati</taxon>
        <taxon>Pseudomonadota</taxon>
        <taxon>Betaproteobacteria</taxon>
        <taxon>Burkholderiales</taxon>
        <taxon>Burkholderiaceae</taxon>
        <taxon>Burkholderia</taxon>
        <taxon>pseudomallei group</taxon>
    </lineage>
</organism>
<evidence type="ECO:0000255" key="1">
    <source>
        <dbReference type="HAMAP-Rule" id="MF_00181"/>
    </source>
</evidence>
<keyword id="KW-0031">Aminopeptidase</keyword>
<keyword id="KW-0963">Cytoplasm</keyword>
<keyword id="KW-0378">Hydrolase</keyword>
<keyword id="KW-0464">Manganese</keyword>
<keyword id="KW-0479">Metal-binding</keyword>
<keyword id="KW-0645">Protease</keyword>
<reference key="1">
    <citation type="journal article" date="2010" name="Genome Biol. Evol.">
        <title>Continuing evolution of Burkholderia mallei through genome reduction and large-scale rearrangements.</title>
        <authorList>
            <person name="Losada L."/>
            <person name="Ronning C.M."/>
            <person name="DeShazer D."/>
            <person name="Woods D."/>
            <person name="Fedorova N."/>
            <person name="Kim H.S."/>
            <person name="Shabalina S.A."/>
            <person name="Pearson T.R."/>
            <person name="Brinkac L."/>
            <person name="Tan P."/>
            <person name="Nandi T."/>
            <person name="Crabtree J."/>
            <person name="Badger J."/>
            <person name="Beckstrom-Sternberg S."/>
            <person name="Saqib M."/>
            <person name="Schutzer S.E."/>
            <person name="Keim P."/>
            <person name="Nierman W.C."/>
        </authorList>
    </citation>
    <scope>NUCLEOTIDE SEQUENCE [LARGE SCALE GENOMIC DNA]</scope>
    <source>
        <strain>NCTC 10247</strain>
    </source>
</reference>
<comment type="function">
    <text evidence="1">Presumably involved in the processing and regular turnover of intracellular proteins. Catalyzes the removal of unsubstituted N-terminal amino acids from various peptides.</text>
</comment>
<comment type="catalytic activity">
    <reaction evidence="1">
        <text>Release of an N-terminal amino acid, Xaa-|-Yaa-, in which Xaa is preferably Leu, but may be other amino acids including Pro although not Arg or Lys, and Yaa may be Pro. Amino acid amides and methyl esters are also readily hydrolyzed, but rates on arylamides are exceedingly low.</text>
        <dbReference type="EC" id="3.4.11.1"/>
    </reaction>
</comment>
<comment type="catalytic activity">
    <reaction evidence="1">
        <text>Release of an N-terminal amino acid, preferentially leucine, but not glutamic or aspartic acids.</text>
        <dbReference type="EC" id="3.4.11.10"/>
    </reaction>
</comment>
<comment type="cofactor">
    <cofactor evidence="1">
        <name>Mn(2+)</name>
        <dbReference type="ChEBI" id="CHEBI:29035"/>
    </cofactor>
    <text evidence="1">Binds 2 manganese ions per subunit.</text>
</comment>
<comment type="subcellular location">
    <subcellularLocation>
        <location evidence="1">Cytoplasm</location>
    </subcellularLocation>
</comment>
<comment type="similarity">
    <text evidence="1">Belongs to the peptidase M17 family.</text>
</comment>
<proteinExistence type="inferred from homology"/>